<sequence length="188" mass="20761">MVIGVLALQGAFIEHQKSLAACGVDSIQVRKPHQLEDIQGLIIPGGESTTMGKLMNQFELFEPIVEKAHNGLPLFGTCAGMIMLAKDIAGSTQPRLGLMDIEVERNAFGRQVESFETELTISELGEAPVRAVFIRAPYIKSVAANVKVLAKYNEKIVLAQQDHYLVAAFHPELTNDVRLHQHFLKMIK</sequence>
<keyword id="KW-0315">Glutamine amidotransferase</keyword>
<keyword id="KW-0378">Hydrolase</keyword>
<keyword id="KW-0456">Lyase</keyword>
<keyword id="KW-0663">Pyridoxal phosphate</keyword>
<keyword id="KW-1185">Reference proteome</keyword>
<organism>
    <name type="scientific">Desulforamulus reducens (strain ATCC BAA-1160 / DSM 100696 / MI-1)</name>
    <name type="common">Desulfotomaculum reducens</name>
    <dbReference type="NCBI Taxonomy" id="349161"/>
    <lineage>
        <taxon>Bacteria</taxon>
        <taxon>Bacillati</taxon>
        <taxon>Bacillota</taxon>
        <taxon>Clostridia</taxon>
        <taxon>Eubacteriales</taxon>
        <taxon>Peptococcaceae</taxon>
        <taxon>Desulforamulus</taxon>
    </lineage>
</organism>
<accession>A4J0G0</accession>
<proteinExistence type="inferred from homology"/>
<protein>
    <recommendedName>
        <fullName evidence="1">Pyridoxal 5'-phosphate synthase subunit PdxT</fullName>
        <ecNumber evidence="1">4.3.3.6</ecNumber>
    </recommendedName>
    <alternativeName>
        <fullName evidence="1">Pdx2</fullName>
    </alternativeName>
    <alternativeName>
        <fullName evidence="1">Pyridoxal 5'-phosphate synthase glutaminase subunit</fullName>
        <ecNumber evidence="1">3.5.1.2</ecNumber>
    </alternativeName>
</protein>
<dbReference type="EC" id="4.3.3.6" evidence="1"/>
<dbReference type="EC" id="3.5.1.2" evidence="1"/>
<dbReference type="EMBL" id="CP000612">
    <property type="protein sequence ID" value="ABO48563.1"/>
    <property type="molecule type" value="Genomic_DNA"/>
</dbReference>
<dbReference type="RefSeq" id="WP_011876407.1">
    <property type="nucleotide sequence ID" value="NC_009253.1"/>
</dbReference>
<dbReference type="SMR" id="A4J0G0"/>
<dbReference type="STRING" id="349161.Dred_0011"/>
<dbReference type="MEROPS" id="C26.A32"/>
<dbReference type="KEGG" id="drm:Dred_0011"/>
<dbReference type="eggNOG" id="COG0311">
    <property type="taxonomic scope" value="Bacteria"/>
</dbReference>
<dbReference type="HOGENOM" id="CLU_069674_2_0_9"/>
<dbReference type="OrthoDB" id="9810320at2"/>
<dbReference type="UniPathway" id="UPA00245"/>
<dbReference type="Proteomes" id="UP000001556">
    <property type="component" value="Chromosome"/>
</dbReference>
<dbReference type="GO" id="GO:0005829">
    <property type="term" value="C:cytosol"/>
    <property type="evidence" value="ECO:0007669"/>
    <property type="project" value="TreeGrafter"/>
</dbReference>
<dbReference type="GO" id="GO:1903600">
    <property type="term" value="C:glutaminase complex"/>
    <property type="evidence" value="ECO:0007669"/>
    <property type="project" value="TreeGrafter"/>
</dbReference>
<dbReference type="GO" id="GO:0004359">
    <property type="term" value="F:glutaminase activity"/>
    <property type="evidence" value="ECO:0007669"/>
    <property type="project" value="UniProtKB-UniRule"/>
</dbReference>
<dbReference type="GO" id="GO:0036381">
    <property type="term" value="F:pyridoxal 5'-phosphate synthase (glutamine hydrolysing) activity"/>
    <property type="evidence" value="ECO:0007669"/>
    <property type="project" value="UniProtKB-UniRule"/>
</dbReference>
<dbReference type="GO" id="GO:0006543">
    <property type="term" value="P:glutamine catabolic process"/>
    <property type="evidence" value="ECO:0007669"/>
    <property type="project" value="UniProtKB-UniRule"/>
</dbReference>
<dbReference type="GO" id="GO:0042823">
    <property type="term" value="P:pyridoxal phosphate biosynthetic process"/>
    <property type="evidence" value="ECO:0007669"/>
    <property type="project" value="UniProtKB-UniRule"/>
</dbReference>
<dbReference type="GO" id="GO:0008614">
    <property type="term" value="P:pyridoxine metabolic process"/>
    <property type="evidence" value="ECO:0007669"/>
    <property type="project" value="TreeGrafter"/>
</dbReference>
<dbReference type="CDD" id="cd01749">
    <property type="entry name" value="GATase1_PB"/>
    <property type="match status" value="1"/>
</dbReference>
<dbReference type="FunFam" id="3.40.50.880:FF:000010">
    <property type="entry name" value="uncharacterized protein LOC100176842 isoform X2"/>
    <property type="match status" value="1"/>
</dbReference>
<dbReference type="Gene3D" id="3.40.50.880">
    <property type="match status" value="1"/>
</dbReference>
<dbReference type="HAMAP" id="MF_01615">
    <property type="entry name" value="PdxT"/>
    <property type="match status" value="1"/>
</dbReference>
<dbReference type="InterPro" id="IPR029062">
    <property type="entry name" value="Class_I_gatase-like"/>
</dbReference>
<dbReference type="InterPro" id="IPR002161">
    <property type="entry name" value="PdxT/SNO"/>
</dbReference>
<dbReference type="InterPro" id="IPR021196">
    <property type="entry name" value="PdxT/SNO_CS"/>
</dbReference>
<dbReference type="NCBIfam" id="TIGR03800">
    <property type="entry name" value="PLP_synth_Pdx2"/>
    <property type="match status" value="1"/>
</dbReference>
<dbReference type="PANTHER" id="PTHR31559">
    <property type="entry name" value="PYRIDOXAL 5'-PHOSPHATE SYNTHASE SUBUNIT SNO"/>
    <property type="match status" value="1"/>
</dbReference>
<dbReference type="PANTHER" id="PTHR31559:SF0">
    <property type="entry name" value="PYRIDOXAL 5'-PHOSPHATE SYNTHASE SUBUNIT SNO1-RELATED"/>
    <property type="match status" value="1"/>
</dbReference>
<dbReference type="Pfam" id="PF01174">
    <property type="entry name" value="SNO"/>
    <property type="match status" value="1"/>
</dbReference>
<dbReference type="PIRSF" id="PIRSF005639">
    <property type="entry name" value="Glut_amidoT_SNO"/>
    <property type="match status" value="1"/>
</dbReference>
<dbReference type="SUPFAM" id="SSF52317">
    <property type="entry name" value="Class I glutamine amidotransferase-like"/>
    <property type="match status" value="1"/>
</dbReference>
<dbReference type="PROSITE" id="PS01236">
    <property type="entry name" value="PDXT_SNO_1"/>
    <property type="match status" value="1"/>
</dbReference>
<dbReference type="PROSITE" id="PS51130">
    <property type="entry name" value="PDXT_SNO_2"/>
    <property type="match status" value="1"/>
</dbReference>
<reference key="1">
    <citation type="submission" date="2007-03" db="EMBL/GenBank/DDBJ databases">
        <title>Complete sequence of Desulfotomaculum reducens MI-1.</title>
        <authorList>
            <consortium name="US DOE Joint Genome Institute"/>
            <person name="Copeland A."/>
            <person name="Lucas S."/>
            <person name="Lapidus A."/>
            <person name="Barry K."/>
            <person name="Detter J.C."/>
            <person name="Glavina del Rio T."/>
            <person name="Hammon N."/>
            <person name="Israni S."/>
            <person name="Dalin E."/>
            <person name="Tice H."/>
            <person name="Pitluck S."/>
            <person name="Sims D."/>
            <person name="Brettin T."/>
            <person name="Bruce D."/>
            <person name="Han C."/>
            <person name="Tapia R."/>
            <person name="Schmutz J."/>
            <person name="Larimer F."/>
            <person name="Land M."/>
            <person name="Hauser L."/>
            <person name="Kyrpides N."/>
            <person name="Kim E."/>
            <person name="Tebo B.M."/>
            <person name="Richardson P."/>
        </authorList>
    </citation>
    <scope>NUCLEOTIDE SEQUENCE [LARGE SCALE GENOMIC DNA]</scope>
    <source>
        <strain>ATCC BAA-1160 / DSM 100696 / MI-1</strain>
    </source>
</reference>
<feature type="chain" id="PRO_1000073627" description="Pyridoxal 5'-phosphate synthase subunit PdxT">
    <location>
        <begin position="1"/>
        <end position="188"/>
    </location>
</feature>
<feature type="active site" description="Nucleophile" evidence="1">
    <location>
        <position position="78"/>
    </location>
</feature>
<feature type="active site" description="Charge relay system" evidence="1">
    <location>
        <position position="170"/>
    </location>
</feature>
<feature type="active site" description="Charge relay system" evidence="1">
    <location>
        <position position="172"/>
    </location>
</feature>
<feature type="binding site" evidence="1">
    <location>
        <begin position="46"/>
        <end position="48"/>
    </location>
    <ligand>
        <name>L-glutamine</name>
        <dbReference type="ChEBI" id="CHEBI:58359"/>
    </ligand>
</feature>
<feature type="binding site" evidence="1">
    <location>
        <position position="105"/>
    </location>
    <ligand>
        <name>L-glutamine</name>
        <dbReference type="ChEBI" id="CHEBI:58359"/>
    </ligand>
</feature>
<feature type="binding site" evidence="1">
    <location>
        <begin position="134"/>
        <end position="135"/>
    </location>
    <ligand>
        <name>L-glutamine</name>
        <dbReference type="ChEBI" id="CHEBI:58359"/>
    </ligand>
</feature>
<comment type="function">
    <text evidence="1">Catalyzes the hydrolysis of glutamine to glutamate and ammonia as part of the biosynthesis of pyridoxal 5'-phosphate. The resulting ammonia molecule is channeled to the active site of PdxS.</text>
</comment>
<comment type="catalytic activity">
    <reaction evidence="1">
        <text>aldehydo-D-ribose 5-phosphate + D-glyceraldehyde 3-phosphate + L-glutamine = pyridoxal 5'-phosphate + L-glutamate + phosphate + 3 H2O + H(+)</text>
        <dbReference type="Rhea" id="RHEA:31507"/>
        <dbReference type="ChEBI" id="CHEBI:15377"/>
        <dbReference type="ChEBI" id="CHEBI:15378"/>
        <dbReference type="ChEBI" id="CHEBI:29985"/>
        <dbReference type="ChEBI" id="CHEBI:43474"/>
        <dbReference type="ChEBI" id="CHEBI:58273"/>
        <dbReference type="ChEBI" id="CHEBI:58359"/>
        <dbReference type="ChEBI" id="CHEBI:59776"/>
        <dbReference type="ChEBI" id="CHEBI:597326"/>
        <dbReference type="EC" id="4.3.3.6"/>
    </reaction>
</comment>
<comment type="catalytic activity">
    <reaction evidence="1">
        <text>L-glutamine + H2O = L-glutamate + NH4(+)</text>
        <dbReference type="Rhea" id="RHEA:15889"/>
        <dbReference type="ChEBI" id="CHEBI:15377"/>
        <dbReference type="ChEBI" id="CHEBI:28938"/>
        <dbReference type="ChEBI" id="CHEBI:29985"/>
        <dbReference type="ChEBI" id="CHEBI:58359"/>
        <dbReference type="EC" id="3.5.1.2"/>
    </reaction>
</comment>
<comment type="pathway">
    <text evidence="1">Cofactor biosynthesis; pyridoxal 5'-phosphate biosynthesis.</text>
</comment>
<comment type="subunit">
    <text evidence="1">In the presence of PdxS, forms a dodecamer of heterodimers. Only shows activity in the heterodimer.</text>
</comment>
<comment type="similarity">
    <text evidence="1">Belongs to the glutaminase PdxT/SNO family.</text>
</comment>
<name>PDXT_DESRM</name>
<evidence type="ECO:0000255" key="1">
    <source>
        <dbReference type="HAMAP-Rule" id="MF_01615"/>
    </source>
</evidence>
<gene>
    <name evidence="1" type="primary">pdxT</name>
    <name type="ordered locus">Dred_0011</name>
</gene>